<evidence type="ECO:0000250" key="1"/>
<evidence type="ECO:0000255" key="2">
    <source>
        <dbReference type="PROSITE-ProRule" id="PRU00051"/>
    </source>
</evidence>
<comment type="function">
    <text evidence="1">Methylation of the membrane-bound methyl-accepting chemotaxis proteins (MCP) to form gamma-glutamyl methyl ester residues in MCP.</text>
</comment>
<comment type="catalytic activity">
    <reaction>
        <text>L-glutamyl-[protein] + S-adenosyl-L-methionine = [protein]-L-glutamate 5-O-methyl ester + S-adenosyl-L-homocysteine</text>
        <dbReference type="Rhea" id="RHEA:24452"/>
        <dbReference type="Rhea" id="RHEA-COMP:10208"/>
        <dbReference type="Rhea" id="RHEA-COMP:10311"/>
        <dbReference type="ChEBI" id="CHEBI:29973"/>
        <dbReference type="ChEBI" id="CHEBI:57856"/>
        <dbReference type="ChEBI" id="CHEBI:59789"/>
        <dbReference type="ChEBI" id="CHEBI:82795"/>
        <dbReference type="EC" id="2.1.1.80"/>
    </reaction>
</comment>
<protein>
    <recommendedName>
        <fullName>Chemotaxis protein methyltransferase</fullName>
        <ecNumber>2.1.1.80</ecNumber>
    </recommendedName>
</protein>
<organism>
    <name type="scientific">Vibrio parahaemolyticus serotype O3:K6 (strain RIMD 2210633)</name>
    <dbReference type="NCBI Taxonomy" id="223926"/>
    <lineage>
        <taxon>Bacteria</taxon>
        <taxon>Pseudomonadati</taxon>
        <taxon>Pseudomonadota</taxon>
        <taxon>Gammaproteobacteria</taxon>
        <taxon>Vibrionales</taxon>
        <taxon>Vibrionaceae</taxon>
        <taxon>Vibrio</taxon>
    </lineage>
</organism>
<proteinExistence type="inferred from homology"/>
<reference key="1">
    <citation type="submission" date="1999-04" db="EMBL/GenBank/DDBJ databases">
        <title>Polar flagellar region I.</title>
        <authorList>
            <person name="McCarter L.L."/>
        </authorList>
    </citation>
    <scope>NUCLEOTIDE SEQUENCE [GENOMIC DNA]</scope>
    <source>
        <strain>BB22</strain>
    </source>
</reference>
<reference key="2">
    <citation type="journal article" date="2003" name="Lancet">
        <title>Genome sequence of Vibrio parahaemolyticus: a pathogenic mechanism distinct from that of V. cholerae.</title>
        <authorList>
            <person name="Makino K."/>
            <person name="Oshima K."/>
            <person name="Kurokawa K."/>
            <person name="Yokoyama K."/>
            <person name="Uda T."/>
            <person name="Tagomori K."/>
            <person name="Iijima Y."/>
            <person name="Najima M."/>
            <person name="Nakano M."/>
            <person name="Yamashita A."/>
            <person name="Kubota Y."/>
            <person name="Kimura S."/>
            <person name="Yasunaga T."/>
            <person name="Honda T."/>
            <person name="Shinagawa H."/>
            <person name="Hattori M."/>
            <person name="Iida T."/>
        </authorList>
    </citation>
    <scope>NUCLEOTIDE SEQUENCE [LARGE SCALE GENOMIC DNA]</scope>
    <source>
        <strain>RIMD 2210633</strain>
    </source>
</reference>
<feature type="chain" id="PRO_0000176045" description="Chemotaxis protein methyltransferase">
    <location>
        <begin position="1"/>
        <end position="275"/>
    </location>
</feature>
<feature type="domain" description="CheR-type methyltransferase" evidence="2">
    <location>
        <begin position="1"/>
        <end position="275"/>
    </location>
</feature>
<feature type="binding site" evidence="1">
    <location>
        <position position="76"/>
    </location>
    <ligand>
        <name>S-adenosyl-L-methionine</name>
        <dbReference type="ChEBI" id="CHEBI:59789"/>
    </ligand>
</feature>
<feature type="binding site" evidence="1">
    <location>
        <position position="78"/>
    </location>
    <ligand>
        <name>S-adenosyl-L-methionine</name>
        <dbReference type="ChEBI" id="CHEBI:59789"/>
    </ligand>
</feature>
<feature type="binding site" evidence="1">
    <location>
        <position position="82"/>
    </location>
    <ligand>
        <name>S-adenosyl-L-methionine</name>
        <dbReference type="ChEBI" id="CHEBI:59789"/>
    </ligand>
</feature>
<feature type="binding site" evidence="1">
    <location>
        <position position="117"/>
    </location>
    <ligand>
        <name>S-adenosyl-L-methionine</name>
        <dbReference type="ChEBI" id="CHEBI:59789"/>
    </ligand>
</feature>
<feature type="binding site" evidence="1">
    <location>
        <position position="145"/>
    </location>
    <ligand>
        <name>S-adenosyl-L-methionine</name>
        <dbReference type="ChEBI" id="CHEBI:59789"/>
    </ligand>
</feature>
<feature type="binding site" evidence="1">
    <location>
        <begin position="201"/>
        <end position="202"/>
    </location>
    <ligand>
        <name>S-adenosyl-L-methionine</name>
        <dbReference type="ChEBI" id="CHEBI:59789"/>
    </ligand>
</feature>
<feature type="binding site" evidence="1">
    <location>
        <begin position="218"/>
        <end position="219"/>
    </location>
    <ligand>
        <name>S-adenosyl-L-methionine</name>
        <dbReference type="ChEBI" id="CHEBI:59789"/>
    </ligand>
</feature>
<accession>Q9X9K2</accession>
<gene>
    <name type="primary">cheR</name>
    <name type="ordered locus">VP0774</name>
</gene>
<dbReference type="EC" id="2.1.1.80"/>
<dbReference type="EMBL" id="U12817">
    <property type="protein sequence ID" value="AAD42911.1"/>
    <property type="molecule type" value="Genomic_DNA"/>
</dbReference>
<dbReference type="EMBL" id="BA000031">
    <property type="protein sequence ID" value="BAC59037.1"/>
    <property type="molecule type" value="Genomic_DNA"/>
</dbReference>
<dbReference type="RefSeq" id="NP_797153.1">
    <property type="nucleotide sequence ID" value="NC_004603.1"/>
</dbReference>
<dbReference type="RefSeq" id="WP_005462295.1">
    <property type="nucleotide sequence ID" value="NC_004603.1"/>
</dbReference>
<dbReference type="SMR" id="Q9X9K2"/>
<dbReference type="GeneID" id="1188271"/>
<dbReference type="KEGG" id="vpa:VP0774"/>
<dbReference type="PATRIC" id="fig|223926.6.peg.739"/>
<dbReference type="eggNOG" id="COG1352">
    <property type="taxonomic scope" value="Bacteria"/>
</dbReference>
<dbReference type="HOGENOM" id="CLU_025854_0_2_6"/>
<dbReference type="Proteomes" id="UP000002493">
    <property type="component" value="Chromosome 1"/>
</dbReference>
<dbReference type="GO" id="GO:0008983">
    <property type="term" value="F:protein-glutamate O-methyltransferase activity"/>
    <property type="evidence" value="ECO:0007669"/>
    <property type="project" value="UniProtKB-EC"/>
</dbReference>
<dbReference type="GO" id="GO:0032259">
    <property type="term" value="P:methylation"/>
    <property type="evidence" value="ECO:0007669"/>
    <property type="project" value="UniProtKB-KW"/>
</dbReference>
<dbReference type="CDD" id="cd02440">
    <property type="entry name" value="AdoMet_MTases"/>
    <property type="match status" value="1"/>
</dbReference>
<dbReference type="FunFam" id="1.10.155.10:FF:000001">
    <property type="entry name" value="Chemotaxis methyltransferase CheR"/>
    <property type="match status" value="1"/>
</dbReference>
<dbReference type="FunFam" id="3.40.50.150:FF:000175">
    <property type="entry name" value="Chemotaxis methyltransferase CheR"/>
    <property type="match status" value="1"/>
</dbReference>
<dbReference type="Gene3D" id="1.10.155.10">
    <property type="entry name" value="Chemotaxis receptor methyltransferase CheR, N-terminal domain"/>
    <property type="match status" value="1"/>
</dbReference>
<dbReference type="Gene3D" id="3.40.50.150">
    <property type="entry name" value="Vaccinia Virus protein VP39"/>
    <property type="match status" value="1"/>
</dbReference>
<dbReference type="InterPro" id="IPR050903">
    <property type="entry name" value="Bact_Chemotaxis_MeTrfase"/>
</dbReference>
<dbReference type="InterPro" id="IPR022642">
    <property type="entry name" value="CheR_C"/>
</dbReference>
<dbReference type="InterPro" id="IPR000780">
    <property type="entry name" value="CheR_MeTrfase"/>
</dbReference>
<dbReference type="InterPro" id="IPR022641">
    <property type="entry name" value="CheR_N"/>
</dbReference>
<dbReference type="InterPro" id="IPR036804">
    <property type="entry name" value="CheR_N_sf"/>
</dbReference>
<dbReference type="InterPro" id="IPR029063">
    <property type="entry name" value="SAM-dependent_MTases_sf"/>
</dbReference>
<dbReference type="PANTHER" id="PTHR24422">
    <property type="entry name" value="CHEMOTAXIS PROTEIN METHYLTRANSFERASE"/>
    <property type="match status" value="1"/>
</dbReference>
<dbReference type="PANTHER" id="PTHR24422:SF21">
    <property type="entry name" value="CHEMOTAXIS PROTEIN METHYLTRANSFERASE 1"/>
    <property type="match status" value="1"/>
</dbReference>
<dbReference type="Pfam" id="PF01739">
    <property type="entry name" value="CheR"/>
    <property type="match status" value="1"/>
</dbReference>
<dbReference type="Pfam" id="PF03705">
    <property type="entry name" value="CheR_N"/>
    <property type="match status" value="1"/>
</dbReference>
<dbReference type="PRINTS" id="PR00996">
    <property type="entry name" value="CHERMTFRASE"/>
</dbReference>
<dbReference type="SMART" id="SM00138">
    <property type="entry name" value="MeTrc"/>
    <property type="match status" value="1"/>
</dbReference>
<dbReference type="SUPFAM" id="SSF47757">
    <property type="entry name" value="Chemotaxis receptor methyltransferase CheR, N-terminal domain"/>
    <property type="match status" value="1"/>
</dbReference>
<dbReference type="SUPFAM" id="SSF53335">
    <property type="entry name" value="S-adenosyl-L-methionine-dependent methyltransferases"/>
    <property type="match status" value="1"/>
</dbReference>
<dbReference type="PROSITE" id="PS50123">
    <property type="entry name" value="CHER"/>
    <property type="match status" value="1"/>
</dbReference>
<keyword id="KW-0489">Methyltransferase</keyword>
<keyword id="KW-0949">S-adenosyl-L-methionine</keyword>
<keyword id="KW-0808">Transferase</keyword>
<name>CHER_VIBPA</name>
<sequence>MTAITISDQEYRDFSRFLESQCGIVLGDSKQYLVRSRLSPLVTKFKLASLSDLLRDVVAGRNRELRIAAVDAMTTNETLWFRDTYPFTVLADKLLPEVAANKRPIKIWSAASSSGQEPYSIAMTILETQQRKPGLLPSVSITATDISASMLEMCRAGVYDNLALGRGLSPERRRTFFEDAGDGRMKVKDNVKRLVNFRPQNLMDSYALMGKFDIIFCRNVLIYFSPEMKSKVLNQMASSLNPGGYLLLGASESLTGLTDKFEMVRCNPGIIYKLK</sequence>